<dbReference type="EMBL" id="BX640447">
    <property type="protein sequence ID" value="CAE33877.1"/>
    <property type="molecule type" value="Genomic_DNA"/>
</dbReference>
<dbReference type="RefSeq" id="WP_010926804.1">
    <property type="nucleotide sequence ID" value="NC_002927.3"/>
</dbReference>
<dbReference type="SMR" id="Q7WH25"/>
<dbReference type="KEGG" id="bbr:BB3385"/>
<dbReference type="eggNOG" id="COG3012">
    <property type="taxonomic scope" value="Bacteria"/>
</dbReference>
<dbReference type="HOGENOM" id="CLU_099590_2_0_4"/>
<dbReference type="Proteomes" id="UP000001027">
    <property type="component" value="Chromosome"/>
</dbReference>
<dbReference type="Gene3D" id="3.10.450.50">
    <property type="match status" value="1"/>
</dbReference>
<dbReference type="HAMAP" id="MF_00612">
    <property type="entry name" value="UPF0225"/>
    <property type="match status" value="1"/>
</dbReference>
<dbReference type="InterPro" id="IPR032710">
    <property type="entry name" value="NTF2-like_dom_sf"/>
</dbReference>
<dbReference type="InterPro" id="IPR023006">
    <property type="entry name" value="UPF0225"/>
</dbReference>
<dbReference type="InterPro" id="IPR048469">
    <property type="entry name" value="YchJ-like_M"/>
</dbReference>
<dbReference type="PANTHER" id="PTHR33747:SF1">
    <property type="entry name" value="ADENYLATE CYCLASE-ASSOCIATED CAP C-TERMINAL DOMAIN-CONTAINING PROTEIN"/>
    <property type="match status" value="1"/>
</dbReference>
<dbReference type="PANTHER" id="PTHR33747">
    <property type="entry name" value="UPF0225 PROTEIN SCO1677"/>
    <property type="match status" value="1"/>
</dbReference>
<dbReference type="Pfam" id="PF17775">
    <property type="entry name" value="YchJ_M-like"/>
    <property type="match status" value="1"/>
</dbReference>
<dbReference type="SUPFAM" id="SSF54427">
    <property type="entry name" value="NTF2-like"/>
    <property type="match status" value="1"/>
</dbReference>
<protein>
    <recommendedName>
        <fullName evidence="1">UPF0225 protein BB3385</fullName>
    </recommendedName>
</protein>
<accession>Q7WH25</accession>
<name>Y3385_BORBR</name>
<feature type="chain" id="PRO_0000071796" description="UPF0225 protein BB3385">
    <location>
        <begin position="1"/>
        <end position="133"/>
    </location>
</feature>
<sequence>MKKHPSSPAACPCGKPRAYPDCCGRWHAGALFLQAPDAESLMRSRYSAFVLDQLDYLLQTWHPDTRPSELEPNAADVKWLGLQIKASQQQDDTHATVEFVARLRQAGRATRLHELSRFVKEEQRWYYVDGDIR</sequence>
<reference key="1">
    <citation type="journal article" date="2003" name="Nat. Genet.">
        <title>Comparative analysis of the genome sequences of Bordetella pertussis, Bordetella parapertussis and Bordetella bronchiseptica.</title>
        <authorList>
            <person name="Parkhill J."/>
            <person name="Sebaihia M."/>
            <person name="Preston A."/>
            <person name="Murphy L.D."/>
            <person name="Thomson N.R."/>
            <person name="Harris D.E."/>
            <person name="Holden M.T.G."/>
            <person name="Churcher C.M."/>
            <person name="Bentley S.D."/>
            <person name="Mungall K.L."/>
            <person name="Cerdeno-Tarraga A.-M."/>
            <person name="Temple L."/>
            <person name="James K.D."/>
            <person name="Harris B."/>
            <person name="Quail M.A."/>
            <person name="Achtman M."/>
            <person name="Atkin R."/>
            <person name="Baker S."/>
            <person name="Basham D."/>
            <person name="Bason N."/>
            <person name="Cherevach I."/>
            <person name="Chillingworth T."/>
            <person name="Collins M."/>
            <person name="Cronin A."/>
            <person name="Davis P."/>
            <person name="Doggett J."/>
            <person name="Feltwell T."/>
            <person name="Goble A."/>
            <person name="Hamlin N."/>
            <person name="Hauser H."/>
            <person name="Holroyd S."/>
            <person name="Jagels K."/>
            <person name="Leather S."/>
            <person name="Moule S."/>
            <person name="Norberczak H."/>
            <person name="O'Neil S."/>
            <person name="Ormond D."/>
            <person name="Price C."/>
            <person name="Rabbinowitsch E."/>
            <person name="Rutter S."/>
            <person name="Sanders M."/>
            <person name="Saunders D."/>
            <person name="Seeger K."/>
            <person name="Sharp S."/>
            <person name="Simmonds M."/>
            <person name="Skelton J."/>
            <person name="Squares R."/>
            <person name="Squares S."/>
            <person name="Stevens K."/>
            <person name="Unwin L."/>
            <person name="Whitehead S."/>
            <person name="Barrell B.G."/>
            <person name="Maskell D.J."/>
        </authorList>
    </citation>
    <scope>NUCLEOTIDE SEQUENCE [LARGE SCALE GENOMIC DNA]</scope>
    <source>
        <strain>ATCC BAA-588 / NCTC 13252 / RB50</strain>
    </source>
</reference>
<organism>
    <name type="scientific">Bordetella bronchiseptica (strain ATCC BAA-588 / NCTC 13252 / RB50)</name>
    <name type="common">Alcaligenes bronchisepticus</name>
    <dbReference type="NCBI Taxonomy" id="257310"/>
    <lineage>
        <taxon>Bacteria</taxon>
        <taxon>Pseudomonadati</taxon>
        <taxon>Pseudomonadota</taxon>
        <taxon>Betaproteobacteria</taxon>
        <taxon>Burkholderiales</taxon>
        <taxon>Alcaligenaceae</taxon>
        <taxon>Bordetella</taxon>
    </lineage>
</organism>
<gene>
    <name type="ordered locus">BB3385</name>
</gene>
<proteinExistence type="inferred from homology"/>
<comment type="similarity">
    <text evidence="1">Belongs to the UPF0225 family.</text>
</comment>
<evidence type="ECO:0000255" key="1">
    <source>
        <dbReference type="HAMAP-Rule" id="MF_00612"/>
    </source>
</evidence>